<comment type="function">
    <text evidence="2">GTP hydrolase that promotes the GTP-dependent binding of aminoacyl-tRNA to the A-site of ribosomes during protein biosynthesis.</text>
</comment>
<comment type="catalytic activity">
    <reaction evidence="2">
        <text>GTP + H2O = GDP + phosphate + H(+)</text>
        <dbReference type="Rhea" id="RHEA:19669"/>
        <dbReference type="ChEBI" id="CHEBI:15377"/>
        <dbReference type="ChEBI" id="CHEBI:15378"/>
        <dbReference type="ChEBI" id="CHEBI:37565"/>
        <dbReference type="ChEBI" id="CHEBI:43474"/>
        <dbReference type="ChEBI" id="CHEBI:58189"/>
        <dbReference type="EC" id="3.6.5.3"/>
    </reaction>
    <physiologicalReaction direction="left-to-right" evidence="2">
        <dbReference type="Rhea" id="RHEA:19670"/>
    </physiologicalReaction>
</comment>
<comment type="subunit">
    <text evidence="2">Monomer.</text>
</comment>
<comment type="subcellular location">
    <subcellularLocation>
        <location evidence="2">Cytoplasm</location>
    </subcellularLocation>
</comment>
<comment type="similarity">
    <text evidence="2">Belongs to the TRAFAC class translation factor GTPase superfamily. Classic translation factor GTPase family. EF-Tu/EF-1A subfamily.</text>
</comment>
<reference key="1">
    <citation type="journal article" date="2007" name="ISME J.">
        <title>Population level functional diversity in a microbial community revealed by comparative genomic and metagenomic analyses.</title>
        <authorList>
            <person name="Bhaya D."/>
            <person name="Grossman A.R."/>
            <person name="Steunou A.-S."/>
            <person name="Khuri N."/>
            <person name="Cohan F.M."/>
            <person name="Hamamura N."/>
            <person name="Melendrez M.C."/>
            <person name="Bateson M.M."/>
            <person name="Ward D.M."/>
            <person name="Heidelberg J.F."/>
        </authorList>
    </citation>
    <scope>NUCLEOTIDE SEQUENCE [LARGE SCALE GENOMIC DNA]</scope>
    <source>
        <strain>JA-2-3B'a(2-13)</strain>
    </source>
</reference>
<evidence type="ECO:0000250" key="1"/>
<evidence type="ECO:0000255" key="2">
    <source>
        <dbReference type="HAMAP-Rule" id="MF_00118"/>
    </source>
</evidence>
<keyword id="KW-0963">Cytoplasm</keyword>
<keyword id="KW-0251">Elongation factor</keyword>
<keyword id="KW-0342">GTP-binding</keyword>
<keyword id="KW-0378">Hydrolase</keyword>
<keyword id="KW-0460">Magnesium</keyword>
<keyword id="KW-0479">Metal-binding</keyword>
<keyword id="KW-0547">Nucleotide-binding</keyword>
<keyword id="KW-0648">Protein biosynthesis</keyword>
<keyword id="KW-1185">Reference proteome</keyword>
<organism>
    <name type="scientific">Synechococcus sp. (strain JA-2-3B'a(2-13))</name>
    <name type="common">Cyanobacteria bacterium Yellowstone B-Prime</name>
    <dbReference type="NCBI Taxonomy" id="321332"/>
    <lineage>
        <taxon>Bacteria</taxon>
        <taxon>Bacillati</taxon>
        <taxon>Cyanobacteriota</taxon>
        <taxon>Cyanophyceae</taxon>
        <taxon>Synechococcales</taxon>
        <taxon>Synechococcaceae</taxon>
        <taxon>Synechococcus</taxon>
    </lineage>
</organism>
<name>EFTU_SYNJB</name>
<dbReference type="EC" id="3.6.5.3" evidence="2"/>
<dbReference type="EMBL" id="CP000240">
    <property type="protein sequence ID" value="ABD01900.1"/>
    <property type="molecule type" value="Genomic_DNA"/>
</dbReference>
<dbReference type="RefSeq" id="WP_011432556.1">
    <property type="nucleotide sequence ID" value="NC_007776.1"/>
</dbReference>
<dbReference type="SMR" id="Q2JMX7"/>
<dbReference type="STRING" id="321332.CYB_0921"/>
<dbReference type="KEGG" id="cyb:CYB_0921"/>
<dbReference type="eggNOG" id="COG0050">
    <property type="taxonomic scope" value="Bacteria"/>
</dbReference>
<dbReference type="HOGENOM" id="CLU_007265_0_0_3"/>
<dbReference type="OrthoDB" id="9804504at2"/>
<dbReference type="Proteomes" id="UP000001938">
    <property type="component" value="Chromosome"/>
</dbReference>
<dbReference type="GO" id="GO:0005829">
    <property type="term" value="C:cytosol"/>
    <property type="evidence" value="ECO:0007669"/>
    <property type="project" value="TreeGrafter"/>
</dbReference>
<dbReference type="GO" id="GO:0005525">
    <property type="term" value="F:GTP binding"/>
    <property type="evidence" value="ECO:0007669"/>
    <property type="project" value="UniProtKB-UniRule"/>
</dbReference>
<dbReference type="GO" id="GO:0003924">
    <property type="term" value="F:GTPase activity"/>
    <property type="evidence" value="ECO:0007669"/>
    <property type="project" value="InterPro"/>
</dbReference>
<dbReference type="GO" id="GO:0003746">
    <property type="term" value="F:translation elongation factor activity"/>
    <property type="evidence" value="ECO:0007669"/>
    <property type="project" value="UniProtKB-UniRule"/>
</dbReference>
<dbReference type="CDD" id="cd01884">
    <property type="entry name" value="EF_Tu"/>
    <property type="match status" value="1"/>
</dbReference>
<dbReference type="CDD" id="cd03697">
    <property type="entry name" value="EFTU_II"/>
    <property type="match status" value="1"/>
</dbReference>
<dbReference type="CDD" id="cd03707">
    <property type="entry name" value="EFTU_III"/>
    <property type="match status" value="1"/>
</dbReference>
<dbReference type="FunFam" id="2.40.30.10:FF:000001">
    <property type="entry name" value="Elongation factor Tu"/>
    <property type="match status" value="1"/>
</dbReference>
<dbReference type="FunFam" id="2.40.30.10:FF:000046">
    <property type="entry name" value="Elongation factor Tu"/>
    <property type="match status" value="1"/>
</dbReference>
<dbReference type="FunFam" id="3.40.50.300:FF:000003">
    <property type="entry name" value="Elongation factor Tu"/>
    <property type="match status" value="1"/>
</dbReference>
<dbReference type="Gene3D" id="3.40.50.300">
    <property type="entry name" value="P-loop containing nucleotide triphosphate hydrolases"/>
    <property type="match status" value="1"/>
</dbReference>
<dbReference type="Gene3D" id="2.40.30.10">
    <property type="entry name" value="Translation factors"/>
    <property type="match status" value="2"/>
</dbReference>
<dbReference type="HAMAP" id="MF_00118_B">
    <property type="entry name" value="EF_Tu_B"/>
    <property type="match status" value="1"/>
</dbReference>
<dbReference type="InterPro" id="IPR041709">
    <property type="entry name" value="EF-Tu_GTP-bd"/>
</dbReference>
<dbReference type="InterPro" id="IPR050055">
    <property type="entry name" value="EF-Tu_GTPase"/>
</dbReference>
<dbReference type="InterPro" id="IPR004161">
    <property type="entry name" value="EFTu-like_2"/>
</dbReference>
<dbReference type="InterPro" id="IPR033720">
    <property type="entry name" value="EFTU_2"/>
</dbReference>
<dbReference type="InterPro" id="IPR031157">
    <property type="entry name" value="G_TR_CS"/>
</dbReference>
<dbReference type="InterPro" id="IPR027417">
    <property type="entry name" value="P-loop_NTPase"/>
</dbReference>
<dbReference type="InterPro" id="IPR005225">
    <property type="entry name" value="Small_GTP-bd"/>
</dbReference>
<dbReference type="InterPro" id="IPR000795">
    <property type="entry name" value="T_Tr_GTP-bd_dom"/>
</dbReference>
<dbReference type="InterPro" id="IPR009000">
    <property type="entry name" value="Transl_B-barrel_sf"/>
</dbReference>
<dbReference type="InterPro" id="IPR009001">
    <property type="entry name" value="Transl_elong_EF1A/Init_IF2_C"/>
</dbReference>
<dbReference type="InterPro" id="IPR004541">
    <property type="entry name" value="Transl_elong_EFTu/EF1A_bac/org"/>
</dbReference>
<dbReference type="InterPro" id="IPR004160">
    <property type="entry name" value="Transl_elong_EFTu/EF1A_C"/>
</dbReference>
<dbReference type="NCBIfam" id="TIGR00485">
    <property type="entry name" value="EF-Tu"/>
    <property type="match status" value="1"/>
</dbReference>
<dbReference type="NCBIfam" id="NF000766">
    <property type="entry name" value="PRK00049.1"/>
    <property type="match status" value="1"/>
</dbReference>
<dbReference type="NCBIfam" id="NF009372">
    <property type="entry name" value="PRK12735.1"/>
    <property type="match status" value="1"/>
</dbReference>
<dbReference type="NCBIfam" id="NF009373">
    <property type="entry name" value="PRK12736.1"/>
    <property type="match status" value="1"/>
</dbReference>
<dbReference type="NCBIfam" id="TIGR00231">
    <property type="entry name" value="small_GTP"/>
    <property type="match status" value="1"/>
</dbReference>
<dbReference type="PANTHER" id="PTHR43721:SF22">
    <property type="entry name" value="ELONGATION FACTOR TU, MITOCHONDRIAL"/>
    <property type="match status" value="1"/>
</dbReference>
<dbReference type="PANTHER" id="PTHR43721">
    <property type="entry name" value="ELONGATION FACTOR TU-RELATED"/>
    <property type="match status" value="1"/>
</dbReference>
<dbReference type="Pfam" id="PF00009">
    <property type="entry name" value="GTP_EFTU"/>
    <property type="match status" value="1"/>
</dbReference>
<dbReference type="Pfam" id="PF03144">
    <property type="entry name" value="GTP_EFTU_D2"/>
    <property type="match status" value="1"/>
</dbReference>
<dbReference type="Pfam" id="PF03143">
    <property type="entry name" value="GTP_EFTU_D3"/>
    <property type="match status" value="1"/>
</dbReference>
<dbReference type="PRINTS" id="PR00315">
    <property type="entry name" value="ELONGATNFCT"/>
</dbReference>
<dbReference type="SUPFAM" id="SSF50465">
    <property type="entry name" value="EF-Tu/eEF-1alpha/eIF2-gamma C-terminal domain"/>
    <property type="match status" value="1"/>
</dbReference>
<dbReference type="SUPFAM" id="SSF52540">
    <property type="entry name" value="P-loop containing nucleoside triphosphate hydrolases"/>
    <property type="match status" value="1"/>
</dbReference>
<dbReference type="SUPFAM" id="SSF50447">
    <property type="entry name" value="Translation proteins"/>
    <property type="match status" value="1"/>
</dbReference>
<dbReference type="PROSITE" id="PS00301">
    <property type="entry name" value="G_TR_1"/>
    <property type="match status" value="1"/>
</dbReference>
<dbReference type="PROSITE" id="PS51722">
    <property type="entry name" value="G_TR_2"/>
    <property type="match status" value="1"/>
</dbReference>
<proteinExistence type="inferred from homology"/>
<protein>
    <recommendedName>
        <fullName evidence="2">Elongation factor Tu</fullName>
        <shortName evidence="2">EF-Tu</shortName>
        <ecNumber evidence="2">3.6.5.3</ecNumber>
    </recommendedName>
</protein>
<sequence length="409" mass="44855">MARAKFERTKPHVNVGTIGHVDHGKTTLTAAITTTLAALGQATAKRYDEIDAAPEEKARGITINTAHVEYQTANRHYAHVDCPGHADYVKNMITGAAQMDGAILVVSAADGPMPQTREHILLARQVGVPSLVVFLNKADMVDDPELLELVELEVRELLSKYDFPGDDVPIIRGSALKALERMTANPKTQRGEDPWVDKIYELMDAVDSYIPTPERDVDKPFLMAVEDVFSITGRGTVATGRIERGRIKVGETVELVGLRETRSTTVTGLEMFQKTLDEGIAGDNVGVLLRGIQKNEVERGMVLAKPKTITPHTNFESEVYVLKKEEGGRHTPFFAGYRPQFYVRTTDVTGTISSFTADDGSQPEMVMPGDRVKMTVELIQPIAIEQGMRFAIREGGRTVGAGVVSKILK</sequence>
<accession>Q2JMX7</accession>
<feature type="chain" id="PRO_1000015769" description="Elongation factor Tu">
    <location>
        <begin position="1"/>
        <end position="409"/>
    </location>
</feature>
<feature type="domain" description="tr-type G">
    <location>
        <begin position="10"/>
        <end position="214"/>
    </location>
</feature>
<feature type="region of interest" description="G1" evidence="1">
    <location>
        <begin position="19"/>
        <end position="26"/>
    </location>
</feature>
<feature type="region of interest" description="G2" evidence="1">
    <location>
        <begin position="60"/>
        <end position="64"/>
    </location>
</feature>
<feature type="region of interest" description="G3" evidence="1">
    <location>
        <begin position="81"/>
        <end position="84"/>
    </location>
</feature>
<feature type="region of interest" description="G4" evidence="1">
    <location>
        <begin position="136"/>
        <end position="139"/>
    </location>
</feature>
<feature type="region of interest" description="G5" evidence="1">
    <location>
        <begin position="174"/>
        <end position="176"/>
    </location>
</feature>
<feature type="binding site" evidence="2">
    <location>
        <begin position="19"/>
        <end position="26"/>
    </location>
    <ligand>
        <name>GTP</name>
        <dbReference type="ChEBI" id="CHEBI:37565"/>
    </ligand>
</feature>
<feature type="binding site" evidence="2">
    <location>
        <position position="26"/>
    </location>
    <ligand>
        <name>Mg(2+)</name>
        <dbReference type="ChEBI" id="CHEBI:18420"/>
    </ligand>
</feature>
<feature type="binding site" evidence="2">
    <location>
        <begin position="81"/>
        <end position="85"/>
    </location>
    <ligand>
        <name>GTP</name>
        <dbReference type="ChEBI" id="CHEBI:37565"/>
    </ligand>
</feature>
<feature type="binding site" evidence="2">
    <location>
        <begin position="136"/>
        <end position="139"/>
    </location>
    <ligand>
        <name>GTP</name>
        <dbReference type="ChEBI" id="CHEBI:37565"/>
    </ligand>
</feature>
<gene>
    <name evidence="2" type="primary">tuf</name>
    <name type="ordered locus">CYB_0921</name>
</gene>